<name>ZH15B_DANRE</name>
<gene>
    <name type="primary">zdhhc15b</name>
</gene>
<feature type="chain" id="PRO_0000444031" description="Palmitoyltransferase ZDHHC15B">
    <location>
        <begin position="1"/>
        <end position="332"/>
    </location>
</feature>
<feature type="topological domain" description="Cytoplasmic" evidence="9">
    <location>
        <begin position="1"/>
        <end position="14"/>
    </location>
</feature>
<feature type="transmembrane region" description="Helical" evidence="9">
    <location>
        <begin position="15"/>
        <end position="35"/>
    </location>
</feature>
<feature type="topological domain" description="Lumenal" evidence="9">
    <location>
        <begin position="36"/>
        <end position="50"/>
    </location>
</feature>
<feature type="transmembrane region" description="Helical" evidence="9">
    <location>
        <begin position="51"/>
        <end position="71"/>
    </location>
</feature>
<feature type="topological domain" description="Cytoplasmic" evidence="9">
    <location>
        <begin position="72"/>
        <end position="166"/>
    </location>
</feature>
<feature type="transmembrane region" description="Helical" evidence="9">
    <location>
        <begin position="167"/>
        <end position="187"/>
    </location>
</feature>
<feature type="topological domain" description="Lumenal" evidence="9">
    <location>
        <begin position="188"/>
        <end position="204"/>
    </location>
</feature>
<feature type="transmembrane region" description="Helical" evidence="9">
    <location>
        <begin position="205"/>
        <end position="228"/>
    </location>
</feature>
<feature type="topological domain" description="Cytoplasmic" evidence="9">
    <location>
        <begin position="229"/>
        <end position="332"/>
    </location>
</feature>
<feature type="domain" description="DHHC" evidence="5">
    <location>
        <begin position="123"/>
        <end position="173"/>
    </location>
</feature>
<feature type="region of interest" description="Disordered" evidence="7">
    <location>
        <begin position="305"/>
        <end position="332"/>
    </location>
</feature>
<feature type="active site" description="S-palmitoyl cysteine intermediate" evidence="5">
    <location>
        <position position="153"/>
    </location>
</feature>
<feature type="binding site" evidence="9 12">
    <location>
        <position position="125"/>
    </location>
    <ligand>
        <name>Zn(2+)</name>
        <dbReference type="ChEBI" id="CHEBI:29105"/>
        <label>1</label>
    </ligand>
</feature>
<feature type="binding site" evidence="9 12">
    <location>
        <position position="128"/>
    </location>
    <ligand>
        <name>Zn(2+)</name>
        <dbReference type="ChEBI" id="CHEBI:29105"/>
        <label>1</label>
    </ligand>
</feature>
<feature type="binding site" evidence="2">
    <location>
        <position position="132"/>
    </location>
    <ligand>
        <name>substrate</name>
    </ligand>
</feature>
<feature type="binding site" evidence="9 12">
    <location>
        <position position="138"/>
    </location>
    <ligand>
        <name>Zn(2+)</name>
        <dbReference type="ChEBI" id="CHEBI:29105"/>
        <label>1</label>
    </ligand>
</feature>
<feature type="binding site" evidence="9 12">
    <location>
        <position position="139"/>
    </location>
    <ligand>
        <name>Zn(2+)</name>
        <dbReference type="ChEBI" id="CHEBI:29105"/>
        <label>2</label>
    </ligand>
</feature>
<feature type="binding site" evidence="9 12">
    <location>
        <position position="142"/>
    </location>
    <ligand>
        <name>Zn(2+)</name>
        <dbReference type="ChEBI" id="CHEBI:29105"/>
        <label>2</label>
    </ligand>
</feature>
<feature type="binding site" evidence="9 12">
    <location>
        <position position="145"/>
    </location>
    <ligand>
        <name>Zn(2+)</name>
        <dbReference type="ChEBI" id="CHEBI:29105"/>
        <label>1</label>
    </ligand>
</feature>
<feature type="binding site" evidence="9 12">
    <location>
        <position position="152"/>
    </location>
    <ligand>
        <name>Zn(2+)</name>
        <dbReference type="ChEBI" id="CHEBI:29105"/>
        <label>2</label>
    </ligand>
</feature>
<feature type="binding site" evidence="9 12">
    <location>
        <position position="159"/>
    </location>
    <ligand>
        <name>Zn(2+)</name>
        <dbReference type="ChEBI" id="CHEBI:29105"/>
        <label>2</label>
    </ligand>
</feature>
<feature type="helix" evidence="13">
    <location>
        <begin position="9"/>
        <end position="14"/>
    </location>
</feature>
<feature type="helix" evidence="13">
    <location>
        <begin position="17"/>
        <end position="34"/>
    </location>
</feature>
<feature type="helix" evidence="13">
    <location>
        <begin position="36"/>
        <end position="40"/>
    </location>
</feature>
<feature type="helix" evidence="13">
    <location>
        <begin position="45"/>
        <end position="71"/>
    </location>
</feature>
<feature type="helix" evidence="13">
    <location>
        <begin position="79"/>
        <end position="81"/>
    </location>
</feature>
<feature type="turn" evidence="13">
    <location>
        <begin position="87"/>
        <end position="89"/>
    </location>
</feature>
<feature type="helix" evidence="13">
    <location>
        <begin position="97"/>
        <end position="108"/>
    </location>
</feature>
<feature type="turn" evidence="13">
    <location>
        <begin position="126"/>
        <end position="129"/>
    </location>
</feature>
<feature type="strand" evidence="13">
    <location>
        <begin position="137"/>
        <end position="139"/>
    </location>
</feature>
<feature type="turn" evidence="13">
    <location>
        <begin position="140"/>
        <end position="143"/>
    </location>
</feature>
<feature type="strand" evidence="13">
    <location>
        <begin position="144"/>
        <end position="146"/>
    </location>
</feature>
<feature type="strand" evidence="13">
    <location>
        <begin position="151"/>
        <end position="153"/>
    </location>
</feature>
<feature type="turn" evidence="13">
    <location>
        <begin position="154"/>
        <end position="157"/>
    </location>
</feature>
<feature type="strand" evidence="13">
    <location>
        <begin position="158"/>
        <end position="161"/>
    </location>
</feature>
<feature type="turn" evidence="13">
    <location>
        <begin position="162"/>
        <end position="164"/>
    </location>
</feature>
<feature type="helix" evidence="13">
    <location>
        <begin position="165"/>
        <end position="194"/>
    </location>
</feature>
<feature type="helix" evidence="13">
    <location>
        <begin position="207"/>
        <end position="233"/>
    </location>
</feature>
<feature type="helix" evidence="13">
    <location>
        <begin position="238"/>
        <end position="242"/>
    </location>
</feature>
<feature type="turn" evidence="13">
    <location>
        <begin position="253"/>
        <end position="256"/>
    </location>
</feature>
<feature type="helix" evidence="13">
    <location>
        <begin position="260"/>
        <end position="268"/>
    </location>
</feature>
<feature type="helix" evidence="13">
    <location>
        <begin position="272"/>
        <end position="274"/>
    </location>
</feature>
<feature type="helix" evidence="13">
    <location>
        <begin position="292"/>
        <end position="294"/>
    </location>
</feature>
<organism>
    <name type="scientific">Danio rerio</name>
    <name type="common">Zebrafish</name>
    <name type="synonym">Brachydanio rerio</name>
    <dbReference type="NCBI Taxonomy" id="7955"/>
    <lineage>
        <taxon>Eukaryota</taxon>
        <taxon>Metazoa</taxon>
        <taxon>Chordata</taxon>
        <taxon>Craniata</taxon>
        <taxon>Vertebrata</taxon>
        <taxon>Euteleostomi</taxon>
        <taxon>Actinopterygii</taxon>
        <taxon>Neopterygii</taxon>
        <taxon>Teleostei</taxon>
        <taxon>Ostariophysi</taxon>
        <taxon>Cypriniformes</taxon>
        <taxon>Danionidae</taxon>
        <taxon>Danioninae</taxon>
        <taxon>Danio</taxon>
    </lineage>
</organism>
<dbReference type="EC" id="2.3.1.225" evidence="9"/>
<dbReference type="EC" id="2.3.1.-" evidence="3"/>
<dbReference type="EMBL" id="CR812849">
    <property type="status" value="NOT_ANNOTATED_CDS"/>
    <property type="molecule type" value="Genomic_DNA"/>
</dbReference>
<dbReference type="PDB" id="6BMS">
    <property type="method" value="X-ray"/>
    <property type="resolution" value="2.44 A"/>
    <property type="chains" value="A/D=1-332"/>
</dbReference>
<dbReference type="PDBsum" id="6BMS"/>
<dbReference type="SMR" id="F1QXD3"/>
<dbReference type="FunCoup" id="F1QXD3">
    <property type="interactions" value="1293"/>
</dbReference>
<dbReference type="STRING" id="7955.ENSDARP00000097436"/>
<dbReference type="PaxDb" id="7955-ENSDARP00000097436"/>
<dbReference type="Ensembl" id="ENSDART00000106658">
    <property type="protein sequence ID" value="ENSDARP00000097436"/>
    <property type="gene ID" value="ENSDARG00000071872"/>
</dbReference>
<dbReference type="eggNOG" id="KOG1315">
    <property type="taxonomic scope" value="Eukaryota"/>
</dbReference>
<dbReference type="HOGENOM" id="CLU_027721_1_1_1"/>
<dbReference type="InParanoid" id="F1QXD3"/>
<dbReference type="OMA" id="NCYSSFP"/>
<dbReference type="PhylomeDB" id="F1QXD3"/>
<dbReference type="TreeFam" id="TF316044"/>
<dbReference type="PRO" id="PR:F1QXD3"/>
<dbReference type="Proteomes" id="UP000000437">
    <property type="component" value="Unplaced"/>
</dbReference>
<dbReference type="Bgee" id="ENSDARG00000071872">
    <property type="expression patterns" value="Expressed in mature ovarian follicle and 28 other cell types or tissues"/>
</dbReference>
<dbReference type="GO" id="GO:0000139">
    <property type="term" value="C:Golgi membrane"/>
    <property type="evidence" value="ECO:0000315"/>
    <property type="project" value="UniProtKB"/>
</dbReference>
<dbReference type="GO" id="GO:0014069">
    <property type="term" value="C:postsynaptic density"/>
    <property type="evidence" value="ECO:0007669"/>
    <property type="project" value="UniProtKB-SubCell"/>
</dbReference>
<dbReference type="GO" id="GO:0019705">
    <property type="term" value="F:protein-cysteine S-myristoyltransferase activity"/>
    <property type="evidence" value="ECO:0007669"/>
    <property type="project" value="RHEA"/>
</dbReference>
<dbReference type="GO" id="GO:0019706">
    <property type="term" value="F:protein-cysteine S-palmitoyltransferase activity"/>
    <property type="evidence" value="ECO:0000314"/>
    <property type="project" value="UniProtKB"/>
</dbReference>
<dbReference type="GO" id="GO:0140439">
    <property type="term" value="F:protein-cysteine S-stearoyltransferase activity"/>
    <property type="evidence" value="ECO:0007669"/>
    <property type="project" value="RHEA"/>
</dbReference>
<dbReference type="GO" id="GO:0008270">
    <property type="term" value="F:zinc ion binding"/>
    <property type="evidence" value="ECO:0000314"/>
    <property type="project" value="UniProtKB"/>
</dbReference>
<dbReference type="GO" id="GO:0018230">
    <property type="term" value="P:peptidyl-L-cysteine S-palmitoylation"/>
    <property type="evidence" value="ECO:0000314"/>
    <property type="project" value="UniProtKB"/>
</dbReference>
<dbReference type="GO" id="GO:0072657">
    <property type="term" value="P:protein localization to membrane"/>
    <property type="evidence" value="ECO:0000250"/>
    <property type="project" value="UniProtKB"/>
</dbReference>
<dbReference type="GO" id="GO:0140450">
    <property type="term" value="P:protein targeting to Golgi apparatus"/>
    <property type="evidence" value="ECO:0000250"/>
    <property type="project" value="UniProtKB"/>
</dbReference>
<dbReference type="InterPro" id="IPR001594">
    <property type="entry name" value="Palmitoyltrfase_DHHC"/>
</dbReference>
<dbReference type="InterPro" id="IPR039859">
    <property type="entry name" value="PFA4/ZDH16/20/ERF2-like"/>
</dbReference>
<dbReference type="PANTHER" id="PTHR12246">
    <property type="entry name" value="PALMITOYLTRANSFERASE ZDHHC16"/>
    <property type="match status" value="1"/>
</dbReference>
<dbReference type="Pfam" id="PF01529">
    <property type="entry name" value="DHHC"/>
    <property type="match status" value="1"/>
</dbReference>
<dbReference type="PROSITE" id="PS50216">
    <property type="entry name" value="DHHC"/>
    <property type="match status" value="1"/>
</dbReference>
<accession>F1QXD3</accession>
<comment type="function">
    <text evidence="3 4 8 9">Palmitoyltransferase that catalyzes the addition of palmitate onto various protein substrates (PubMed:29326245). Has no stringent fatty acid selectivity and in addition to palmitate can also transfer onto target proteins myristate from tetradecanoyl-CoA and stearate from octadecanoyl-CoA (By similarity). May thereby regulate target proteins association and localization to membranes (By similarity). In the nervous system, probably catalyzes the palmitoylation of synaptic proteins and is involved in the differentiation of dopaminergic neurons and the development of the diencephalon (PubMed:26095893).</text>
</comment>
<comment type="catalytic activity">
    <reaction evidence="9">
        <text>L-cysteinyl-[protein] + hexadecanoyl-CoA = S-hexadecanoyl-L-cysteinyl-[protein] + CoA</text>
        <dbReference type="Rhea" id="RHEA:36683"/>
        <dbReference type="Rhea" id="RHEA-COMP:10131"/>
        <dbReference type="Rhea" id="RHEA-COMP:11032"/>
        <dbReference type="ChEBI" id="CHEBI:29950"/>
        <dbReference type="ChEBI" id="CHEBI:57287"/>
        <dbReference type="ChEBI" id="CHEBI:57379"/>
        <dbReference type="ChEBI" id="CHEBI:74151"/>
        <dbReference type="EC" id="2.3.1.225"/>
    </reaction>
    <physiologicalReaction direction="left-to-right" evidence="11">
        <dbReference type="Rhea" id="RHEA:36684"/>
    </physiologicalReaction>
</comment>
<comment type="catalytic activity">
    <reaction evidence="3">
        <text>L-cysteinyl-[protein] + tetradecanoyl-CoA = S-tetradecanoyl-L-cysteinyl-[protein] + CoA</text>
        <dbReference type="Rhea" id="RHEA:59736"/>
        <dbReference type="Rhea" id="RHEA-COMP:10131"/>
        <dbReference type="Rhea" id="RHEA-COMP:15433"/>
        <dbReference type="ChEBI" id="CHEBI:29950"/>
        <dbReference type="ChEBI" id="CHEBI:57287"/>
        <dbReference type="ChEBI" id="CHEBI:57385"/>
        <dbReference type="ChEBI" id="CHEBI:143199"/>
    </reaction>
    <physiologicalReaction direction="left-to-right" evidence="3">
        <dbReference type="Rhea" id="RHEA:59737"/>
    </physiologicalReaction>
</comment>
<comment type="catalytic activity">
    <reaction evidence="3">
        <text>L-cysteinyl-[protein] + octadecanoyl-CoA = S-octadecanoyl-L-cysteinyl-[protein] + CoA</text>
        <dbReference type="Rhea" id="RHEA:59740"/>
        <dbReference type="Rhea" id="RHEA-COMP:10131"/>
        <dbReference type="Rhea" id="RHEA-COMP:15434"/>
        <dbReference type="ChEBI" id="CHEBI:29950"/>
        <dbReference type="ChEBI" id="CHEBI:57287"/>
        <dbReference type="ChEBI" id="CHEBI:57394"/>
        <dbReference type="ChEBI" id="CHEBI:143200"/>
    </reaction>
    <physiologicalReaction direction="left-to-right" evidence="3">
        <dbReference type="Rhea" id="RHEA:59741"/>
    </physiologicalReaction>
</comment>
<comment type="subcellular location">
    <subcellularLocation>
        <location evidence="9">Golgi apparatus membrane</location>
        <topology evidence="9">Multi-pass membrane protein</topology>
    </subcellularLocation>
    <subcellularLocation>
        <location evidence="1">Postsynaptic density</location>
    </subcellularLocation>
</comment>
<comment type="developmental stage">
    <text evidence="8">Maternally supplied mRNAs are initially observed (PubMed:26095893). Ubiquitous zygotic expression is visible at 3 hours post-fertilization/hpf and strongly increases from 8 hpf to 48 hpf (PubMed:26095893). From 10 hpf, the expression progressively concentrates in the anterior neural plate (PubMed:26095893). From 18 hpf through 48 hpf, expression is abundant in the forebrain, especially in the diencephalon (PubMed:26095893).</text>
</comment>
<comment type="domain">
    <text evidence="3">The DHHC domain is required for palmitoyltransferase activity.</text>
</comment>
<comment type="PTM">
    <text evidence="9">Autopalmitoylated (in vitro).</text>
</comment>
<comment type="disruption phenotype">
    <text evidence="8">Morpholino knockdown has no effect on development till 18 hpf (PubMed:26095893). At 24 hpf, the embryos exhibit abnormal brain development with indistinguishable boundaries among different regions in the forebrain and a slightly reduced size of diencephalon (PubMed:26095893). A reduction in mature dopaminergic neurons is observed associated within learning and memory deficits (PubMed:26095893).</text>
</comment>
<comment type="similarity">
    <text evidence="6">Belongs to the DHHC palmitoyltransferase family.</text>
</comment>
<evidence type="ECO:0000250" key="1">
    <source>
        <dbReference type="UniProtKB" id="Q2TGJ4"/>
    </source>
</evidence>
<evidence type="ECO:0000250" key="2">
    <source>
        <dbReference type="UniProtKB" id="Q5W0Z9"/>
    </source>
</evidence>
<evidence type="ECO:0000250" key="3">
    <source>
        <dbReference type="UniProtKB" id="Q8BGJ0"/>
    </source>
</evidence>
<evidence type="ECO:0000250" key="4">
    <source>
        <dbReference type="UniProtKB" id="Q96MV8"/>
    </source>
</evidence>
<evidence type="ECO:0000255" key="5">
    <source>
        <dbReference type="PROSITE-ProRule" id="PRU00067"/>
    </source>
</evidence>
<evidence type="ECO:0000255" key="6">
    <source>
        <dbReference type="RuleBase" id="RU079119"/>
    </source>
</evidence>
<evidence type="ECO:0000256" key="7">
    <source>
        <dbReference type="SAM" id="MobiDB-lite"/>
    </source>
</evidence>
<evidence type="ECO:0000269" key="8">
    <source>
    </source>
</evidence>
<evidence type="ECO:0000269" key="9">
    <source>
    </source>
</evidence>
<evidence type="ECO:0000305" key="10"/>
<evidence type="ECO:0000305" key="11">
    <source>
    </source>
</evidence>
<evidence type="ECO:0007744" key="12">
    <source>
        <dbReference type="PDB" id="6BMS"/>
    </source>
</evidence>
<evidence type="ECO:0007829" key="13">
    <source>
        <dbReference type="PDB" id="6BMS"/>
    </source>
</evidence>
<reference key="1">
    <citation type="journal article" date="2013" name="Nature">
        <title>The zebrafish reference genome sequence and its relationship to the human genome.</title>
        <authorList>
            <person name="Howe K."/>
            <person name="Clark M.D."/>
            <person name="Torroja C.F."/>
            <person name="Torrance J."/>
            <person name="Berthelot C."/>
            <person name="Muffato M."/>
            <person name="Collins J.E."/>
            <person name="Humphray S."/>
            <person name="McLaren K."/>
            <person name="Matthews L."/>
            <person name="McLaren S."/>
            <person name="Sealy I."/>
            <person name="Caccamo M."/>
            <person name="Churcher C."/>
            <person name="Scott C."/>
            <person name="Barrett J.C."/>
            <person name="Koch R."/>
            <person name="Rauch G.J."/>
            <person name="White S."/>
            <person name="Chow W."/>
            <person name="Kilian B."/>
            <person name="Quintais L.T."/>
            <person name="Guerra-Assuncao J.A."/>
            <person name="Zhou Y."/>
            <person name="Gu Y."/>
            <person name="Yen J."/>
            <person name="Vogel J.H."/>
            <person name="Eyre T."/>
            <person name="Redmond S."/>
            <person name="Banerjee R."/>
            <person name="Chi J."/>
            <person name="Fu B."/>
            <person name="Langley E."/>
            <person name="Maguire S.F."/>
            <person name="Laird G.K."/>
            <person name="Lloyd D."/>
            <person name="Kenyon E."/>
            <person name="Donaldson S."/>
            <person name="Sehra H."/>
            <person name="Almeida-King J."/>
            <person name="Loveland J."/>
            <person name="Trevanion S."/>
            <person name="Jones M."/>
            <person name="Quail M."/>
            <person name="Willey D."/>
            <person name="Hunt A."/>
            <person name="Burton J."/>
            <person name="Sims S."/>
            <person name="McLay K."/>
            <person name="Plumb B."/>
            <person name="Davis J."/>
            <person name="Clee C."/>
            <person name="Oliver K."/>
            <person name="Clark R."/>
            <person name="Riddle C."/>
            <person name="Elliot D."/>
            <person name="Threadgold G."/>
            <person name="Harden G."/>
            <person name="Ware D."/>
            <person name="Begum S."/>
            <person name="Mortimore B."/>
            <person name="Kerry G."/>
            <person name="Heath P."/>
            <person name="Phillimore B."/>
            <person name="Tracey A."/>
            <person name="Corby N."/>
            <person name="Dunn M."/>
            <person name="Johnson C."/>
            <person name="Wood J."/>
            <person name="Clark S."/>
            <person name="Pelan S."/>
            <person name="Griffiths G."/>
            <person name="Smith M."/>
            <person name="Glithero R."/>
            <person name="Howden P."/>
            <person name="Barker N."/>
            <person name="Lloyd C."/>
            <person name="Stevens C."/>
            <person name="Harley J."/>
            <person name="Holt K."/>
            <person name="Panagiotidis G."/>
            <person name="Lovell J."/>
            <person name="Beasley H."/>
            <person name="Henderson C."/>
            <person name="Gordon D."/>
            <person name="Auger K."/>
            <person name="Wright D."/>
            <person name="Collins J."/>
            <person name="Raisen C."/>
            <person name="Dyer L."/>
            <person name="Leung K."/>
            <person name="Robertson L."/>
            <person name="Ambridge K."/>
            <person name="Leongamornlert D."/>
            <person name="McGuire S."/>
            <person name="Gilderthorp R."/>
            <person name="Griffiths C."/>
            <person name="Manthravadi D."/>
            <person name="Nichol S."/>
            <person name="Barker G."/>
            <person name="Whitehead S."/>
            <person name="Kay M."/>
            <person name="Brown J."/>
            <person name="Murnane C."/>
            <person name="Gray E."/>
            <person name="Humphries M."/>
            <person name="Sycamore N."/>
            <person name="Barker D."/>
            <person name="Saunders D."/>
            <person name="Wallis J."/>
            <person name="Babbage A."/>
            <person name="Hammond S."/>
            <person name="Mashreghi-Mohammadi M."/>
            <person name="Barr L."/>
            <person name="Martin S."/>
            <person name="Wray P."/>
            <person name="Ellington A."/>
            <person name="Matthews N."/>
            <person name="Ellwood M."/>
            <person name="Woodmansey R."/>
            <person name="Clark G."/>
            <person name="Cooper J."/>
            <person name="Tromans A."/>
            <person name="Grafham D."/>
            <person name="Skuce C."/>
            <person name="Pandian R."/>
            <person name="Andrews R."/>
            <person name="Harrison E."/>
            <person name="Kimberley A."/>
            <person name="Garnett J."/>
            <person name="Fosker N."/>
            <person name="Hall R."/>
            <person name="Garner P."/>
            <person name="Kelly D."/>
            <person name="Bird C."/>
            <person name="Palmer S."/>
            <person name="Gehring I."/>
            <person name="Berger A."/>
            <person name="Dooley C.M."/>
            <person name="Ersan-Urun Z."/>
            <person name="Eser C."/>
            <person name="Geiger H."/>
            <person name="Geisler M."/>
            <person name="Karotki L."/>
            <person name="Kirn A."/>
            <person name="Konantz J."/>
            <person name="Konantz M."/>
            <person name="Oberlander M."/>
            <person name="Rudolph-Geiger S."/>
            <person name="Teucke M."/>
            <person name="Lanz C."/>
            <person name="Raddatz G."/>
            <person name="Osoegawa K."/>
            <person name="Zhu B."/>
            <person name="Rapp A."/>
            <person name="Widaa S."/>
            <person name="Langford C."/>
            <person name="Yang F."/>
            <person name="Schuster S.C."/>
            <person name="Carter N.P."/>
            <person name="Harrow J."/>
            <person name="Ning Z."/>
            <person name="Herrero J."/>
            <person name="Searle S.M."/>
            <person name="Enright A."/>
            <person name="Geisler R."/>
            <person name="Plasterk R.H."/>
            <person name="Lee C."/>
            <person name="Westerfield M."/>
            <person name="de Jong P.J."/>
            <person name="Zon L.I."/>
            <person name="Postlethwait J.H."/>
            <person name="Nusslein-Volhard C."/>
            <person name="Hubbard T.J."/>
            <person name="Roest Crollius H."/>
            <person name="Rogers J."/>
            <person name="Stemple D.L."/>
        </authorList>
    </citation>
    <scope>NUCLEOTIDE SEQUENCE [LARGE SCALE GENOMIC DNA]</scope>
    <source>
        <strain>Tuebingen</strain>
    </source>
</reference>
<reference key="2">
    <citation type="journal article" date="2015" name="J. Cell. Biochem.">
        <title>Zdhhc15b Regulates Differentiation of Diencephalic Dopaminergic Neurons in zebrafish.</title>
        <authorList>
            <person name="Wang F."/>
            <person name="Chen X."/>
            <person name="Shi W."/>
            <person name="Yao L."/>
            <person name="Gao M."/>
            <person name="Yang Y."/>
            <person name="Hao A."/>
        </authorList>
    </citation>
    <scope>FUNCTION</scope>
    <scope>DEVELOPMENTAL STAGE</scope>
    <scope>DISRUPTION PHENOTYPE</scope>
</reference>
<reference key="3">
    <citation type="journal article" date="2018" name="Science">
        <title>Fatty acyl recognition and transfer by an integral membrane S-acyltransferase.</title>
        <authorList>
            <person name="Rana M.S."/>
            <person name="Kumar P."/>
            <person name="Lee C.J."/>
            <person name="Verardi R."/>
            <person name="Rajashankar K.R."/>
            <person name="Banerjee A."/>
        </authorList>
    </citation>
    <scope>X-RAY CRYSTALLOGRAPHY (2.44 ANGSTROMS) IN COMPLEX WITH ZINC</scope>
    <scope>FUNCTION</scope>
    <scope>CATALYTIC ACTIVITY</scope>
    <scope>SUBCELLULAR LOCATION</scope>
    <scope>TOPOLOGY</scope>
</reference>
<sequence>MALSRALRCCQRIFSWIPVIIISSVVLWSYYAYVFELCFVTLSNNLERVTYLLIFHVCFIMFCWTYWKAIFTPPSTPTKKFHLSYTDKERYEMEERPEVQKQILVDIAKKLPIFTRAQSGAIRFCDRCQVIKPDRCHHCSVCETCVLKMDHHCPWVNNCVGFSNYKFFLLFLSYSMIYCVFIASTVFQYFLKFWVGDLPNGPAKFHVLFLLFVALMFFVSLMFLFGYHCWLVAKNRSTLEAFSPPVFQNGPDRNGFNVGLSKNLRQVFGEHKKLWFIPVFTSQGDGHYFPLRTLRESENPLLANEEKWVEDGGSDEESADENGSSLLIRTES</sequence>
<protein>
    <recommendedName>
        <fullName evidence="10">Palmitoyltransferase ZDHHC15B</fullName>
        <ecNumber evidence="9">2.3.1.225</ecNumber>
    </recommendedName>
    <alternativeName>
        <fullName evidence="3">Acyltransferase ZDHHC15B</fullName>
        <ecNumber evidence="3">2.3.1.-</ecNumber>
    </alternativeName>
    <alternativeName>
        <fullName>Zinc finger DHHC domain-containing protein 15B</fullName>
    </alternativeName>
</protein>
<keyword id="KW-0002">3D-structure</keyword>
<keyword id="KW-0012">Acyltransferase</keyword>
<keyword id="KW-0333">Golgi apparatus</keyword>
<keyword id="KW-0449">Lipoprotein</keyword>
<keyword id="KW-0472">Membrane</keyword>
<keyword id="KW-0479">Metal-binding</keyword>
<keyword id="KW-0564">Palmitate</keyword>
<keyword id="KW-1185">Reference proteome</keyword>
<keyword id="KW-0770">Synapse</keyword>
<keyword id="KW-0808">Transferase</keyword>
<keyword id="KW-0812">Transmembrane</keyword>
<keyword id="KW-1133">Transmembrane helix</keyword>
<keyword id="KW-0862">Zinc</keyword>
<proteinExistence type="evidence at protein level"/>